<sequence length="629" mass="69535">MFYPDPFDVIIIGGGHAGTEAAMAAARMGQQTLLLTHNIDTLGQMSCNPAIGGIGKGHLVKEVDALGGLMAKAIDQAGIQFRILNASKGPAVRATRAQADRVLYRQAVRTALENQPNLMIFQQAVEDLIVENDRVVGAVTQMGLKFRAKAVVLTVGTFLDGKIHIGLDNYSGGRAGDPPSIPLSRRLRELPLRVGRLKTGTPPRIDARTIDFSVLAQQHGDNPMPVFSFMGNASQHPQQVPCYITHTNEKTHDVIRSNLDRSPMYAGVIEGVGPRYCPSIEDKVMRFAERNQHQIFLEPEGLTSNEIYPNGISTSLPFDVQMQIVRSMQGMENAKIVRPGYAIEYDFFDPRDLKPTLESKFIQGLFFAGQINGTTGYEEAAAQGLLAGLNAARLSADKEGWAPARSQAYLGVLVDDLCTLGTKEPYRMFTSRAEYRLMLREDNADLRLTEIGRELGLVDDERWARFNEKLENIERERQRLKSTWVTPSAEAAAEVNAHLTAPLSREASGEDLLRRPEMTYEKLTTLTPFAPALTDEQAAEQVEIQVKYEGYIARQQDEIEKQLRNENTLLPATLDYRQVSGLSNEVIAKLNDHKPASIGQASRISGVTPAAISILLVWLKKQGMLRRSA</sequence>
<feature type="chain" id="PRO_1000117716" description="tRNA uridine 5-carboxymethylaminomethyl modification enzyme MnmG">
    <location>
        <begin position="1"/>
        <end position="629"/>
    </location>
</feature>
<feature type="binding site" evidence="1">
    <location>
        <begin position="13"/>
        <end position="18"/>
    </location>
    <ligand>
        <name>FAD</name>
        <dbReference type="ChEBI" id="CHEBI:57692"/>
    </ligand>
</feature>
<feature type="binding site" evidence="1">
    <location>
        <position position="125"/>
    </location>
    <ligand>
        <name>FAD</name>
        <dbReference type="ChEBI" id="CHEBI:57692"/>
    </ligand>
</feature>
<feature type="binding site" evidence="1">
    <location>
        <position position="180"/>
    </location>
    <ligand>
        <name>FAD</name>
        <dbReference type="ChEBI" id="CHEBI:57692"/>
    </ligand>
</feature>
<feature type="binding site" evidence="1">
    <location>
        <begin position="273"/>
        <end position="287"/>
    </location>
    <ligand>
        <name>NAD(+)</name>
        <dbReference type="ChEBI" id="CHEBI:57540"/>
    </ligand>
</feature>
<feature type="binding site" evidence="1">
    <location>
        <position position="370"/>
    </location>
    <ligand>
        <name>FAD</name>
        <dbReference type="ChEBI" id="CHEBI:57692"/>
    </ligand>
</feature>
<evidence type="ECO:0000255" key="1">
    <source>
        <dbReference type="HAMAP-Rule" id="MF_00129"/>
    </source>
</evidence>
<accession>B7MGG1</accession>
<comment type="function">
    <text evidence="1">NAD-binding protein involved in the addition of a carboxymethylaminomethyl (cmnm) group at the wobble position (U34) of certain tRNAs, forming tRNA-cmnm(5)s(2)U34.</text>
</comment>
<comment type="cofactor">
    <cofactor evidence="1">
        <name>FAD</name>
        <dbReference type="ChEBI" id="CHEBI:57692"/>
    </cofactor>
</comment>
<comment type="subunit">
    <text evidence="1">Homodimer. Heterotetramer of two MnmE and two MnmG subunits.</text>
</comment>
<comment type="subcellular location">
    <subcellularLocation>
        <location evidence="1">Cytoplasm</location>
    </subcellularLocation>
</comment>
<comment type="similarity">
    <text evidence="1">Belongs to the MnmG family.</text>
</comment>
<name>MNMG_ECO45</name>
<dbReference type="EMBL" id="CU928161">
    <property type="protein sequence ID" value="CAR05369.1"/>
    <property type="molecule type" value="Genomic_DNA"/>
</dbReference>
<dbReference type="RefSeq" id="WP_000499800.1">
    <property type="nucleotide sequence ID" value="NC_011742.1"/>
</dbReference>
<dbReference type="SMR" id="B7MGG1"/>
<dbReference type="KEGG" id="ecz:ECS88_4163"/>
<dbReference type="HOGENOM" id="CLU_007831_2_2_6"/>
<dbReference type="Proteomes" id="UP000000747">
    <property type="component" value="Chromosome"/>
</dbReference>
<dbReference type="GO" id="GO:0005829">
    <property type="term" value="C:cytosol"/>
    <property type="evidence" value="ECO:0007669"/>
    <property type="project" value="TreeGrafter"/>
</dbReference>
<dbReference type="GO" id="GO:0050660">
    <property type="term" value="F:flavin adenine dinucleotide binding"/>
    <property type="evidence" value="ECO:0007669"/>
    <property type="project" value="UniProtKB-UniRule"/>
</dbReference>
<dbReference type="GO" id="GO:0030488">
    <property type="term" value="P:tRNA methylation"/>
    <property type="evidence" value="ECO:0007669"/>
    <property type="project" value="TreeGrafter"/>
</dbReference>
<dbReference type="GO" id="GO:0002098">
    <property type="term" value="P:tRNA wobble uridine modification"/>
    <property type="evidence" value="ECO:0007669"/>
    <property type="project" value="InterPro"/>
</dbReference>
<dbReference type="FunFam" id="1.10.10.1800:FF:000001">
    <property type="entry name" value="tRNA uridine 5-carboxymethylaminomethyl modification enzyme MnmG"/>
    <property type="match status" value="1"/>
</dbReference>
<dbReference type="FunFam" id="1.10.150.570:FF:000001">
    <property type="entry name" value="tRNA uridine 5-carboxymethylaminomethyl modification enzyme MnmG"/>
    <property type="match status" value="1"/>
</dbReference>
<dbReference type="FunFam" id="3.50.50.60:FF:000002">
    <property type="entry name" value="tRNA uridine 5-carboxymethylaminomethyl modification enzyme MnmG"/>
    <property type="match status" value="1"/>
</dbReference>
<dbReference type="FunFam" id="3.50.50.60:FF:000010">
    <property type="entry name" value="tRNA uridine 5-carboxymethylaminomethyl modification enzyme MnmG"/>
    <property type="match status" value="1"/>
</dbReference>
<dbReference type="Gene3D" id="3.50.50.60">
    <property type="entry name" value="FAD/NAD(P)-binding domain"/>
    <property type="match status" value="2"/>
</dbReference>
<dbReference type="Gene3D" id="1.10.150.570">
    <property type="entry name" value="GidA associated domain, C-terminal subdomain"/>
    <property type="match status" value="1"/>
</dbReference>
<dbReference type="Gene3D" id="1.10.10.1800">
    <property type="entry name" value="tRNA uridine 5-carboxymethylaminomethyl modification enzyme MnmG/GidA"/>
    <property type="match status" value="1"/>
</dbReference>
<dbReference type="HAMAP" id="MF_00129">
    <property type="entry name" value="MnmG_GidA"/>
    <property type="match status" value="1"/>
</dbReference>
<dbReference type="InterPro" id="IPR036188">
    <property type="entry name" value="FAD/NAD-bd_sf"/>
</dbReference>
<dbReference type="InterPro" id="IPR049312">
    <property type="entry name" value="GIDA_C_N"/>
</dbReference>
<dbReference type="InterPro" id="IPR004416">
    <property type="entry name" value="MnmG"/>
</dbReference>
<dbReference type="InterPro" id="IPR002218">
    <property type="entry name" value="MnmG-rel"/>
</dbReference>
<dbReference type="InterPro" id="IPR020595">
    <property type="entry name" value="MnmG-rel_CS"/>
</dbReference>
<dbReference type="InterPro" id="IPR026904">
    <property type="entry name" value="MnmG_C"/>
</dbReference>
<dbReference type="InterPro" id="IPR047001">
    <property type="entry name" value="MnmG_C_subdom"/>
</dbReference>
<dbReference type="InterPro" id="IPR044920">
    <property type="entry name" value="MnmG_C_subdom_sf"/>
</dbReference>
<dbReference type="InterPro" id="IPR040131">
    <property type="entry name" value="MnmG_N"/>
</dbReference>
<dbReference type="NCBIfam" id="TIGR00136">
    <property type="entry name" value="mnmG_gidA"/>
    <property type="match status" value="1"/>
</dbReference>
<dbReference type="PANTHER" id="PTHR11806">
    <property type="entry name" value="GLUCOSE INHIBITED DIVISION PROTEIN A"/>
    <property type="match status" value="1"/>
</dbReference>
<dbReference type="PANTHER" id="PTHR11806:SF0">
    <property type="entry name" value="PROTEIN MTO1 HOMOLOG, MITOCHONDRIAL"/>
    <property type="match status" value="1"/>
</dbReference>
<dbReference type="Pfam" id="PF01134">
    <property type="entry name" value="GIDA"/>
    <property type="match status" value="1"/>
</dbReference>
<dbReference type="Pfam" id="PF21680">
    <property type="entry name" value="GIDA_C_1st"/>
    <property type="match status" value="1"/>
</dbReference>
<dbReference type="Pfam" id="PF13932">
    <property type="entry name" value="SAM_GIDA_C"/>
    <property type="match status" value="1"/>
</dbReference>
<dbReference type="SMART" id="SM01228">
    <property type="entry name" value="GIDA_assoc_3"/>
    <property type="match status" value="1"/>
</dbReference>
<dbReference type="SUPFAM" id="SSF51905">
    <property type="entry name" value="FAD/NAD(P)-binding domain"/>
    <property type="match status" value="1"/>
</dbReference>
<dbReference type="PROSITE" id="PS01280">
    <property type="entry name" value="GIDA_1"/>
    <property type="match status" value="1"/>
</dbReference>
<dbReference type="PROSITE" id="PS01281">
    <property type="entry name" value="GIDA_2"/>
    <property type="match status" value="1"/>
</dbReference>
<proteinExistence type="inferred from homology"/>
<reference key="1">
    <citation type="journal article" date="2009" name="PLoS Genet.">
        <title>Organised genome dynamics in the Escherichia coli species results in highly diverse adaptive paths.</title>
        <authorList>
            <person name="Touchon M."/>
            <person name="Hoede C."/>
            <person name="Tenaillon O."/>
            <person name="Barbe V."/>
            <person name="Baeriswyl S."/>
            <person name="Bidet P."/>
            <person name="Bingen E."/>
            <person name="Bonacorsi S."/>
            <person name="Bouchier C."/>
            <person name="Bouvet O."/>
            <person name="Calteau A."/>
            <person name="Chiapello H."/>
            <person name="Clermont O."/>
            <person name="Cruveiller S."/>
            <person name="Danchin A."/>
            <person name="Diard M."/>
            <person name="Dossat C."/>
            <person name="Karoui M.E."/>
            <person name="Frapy E."/>
            <person name="Garry L."/>
            <person name="Ghigo J.M."/>
            <person name="Gilles A.M."/>
            <person name="Johnson J."/>
            <person name="Le Bouguenec C."/>
            <person name="Lescat M."/>
            <person name="Mangenot S."/>
            <person name="Martinez-Jehanne V."/>
            <person name="Matic I."/>
            <person name="Nassif X."/>
            <person name="Oztas S."/>
            <person name="Petit M.A."/>
            <person name="Pichon C."/>
            <person name="Rouy Z."/>
            <person name="Ruf C.S."/>
            <person name="Schneider D."/>
            <person name="Tourret J."/>
            <person name="Vacherie B."/>
            <person name="Vallenet D."/>
            <person name="Medigue C."/>
            <person name="Rocha E.P.C."/>
            <person name="Denamur E."/>
        </authorList>
    </citation>
    <scope>NUCLEOTIDE SEQUENCE [LARGE SCALE GENOMIC DNA]</scope>
    <source>
        <strain>S88 / ExPEC</strain>
    </source>
</reference>
<organism>
    <name type="scientific">Escherichia coli O45:K1 (strain S88 / ExPEC)</name>
    <dbReference type="NCBI Taxonomy" id="585035"/>
    <lineage>
        <taxon>Bacteria</taxon>
        <taxon>Pseudomonadati</taxon>
        <taxon>Pseudomonadota</taxon>
        <taxon>Gammaproteobacteria</taxon>
        <taxon>Enterobacterales</taxon>
        <taxon>Enterobacteriaceae</taxon>
        <taxon>Escherichia</taxon>
    </lineage>
</organism>
<keyword id="KW-0963">Cytoplasm</keyword>
<keyword id="KW-0274">FAD</keyword>
<keyword id="KW-0285">Flavoprotein</keyword>
<keyword id="KW-0520">NAD</keyword>
<keyword id="KW-1185">Reference proteome</keyword>
<keyword id="KW-0819">tRNA processing</keyword>
<protein>
    <recommendedName>
        <fullName evidence="1">tRNA uridine 5-carboxymethylaminomethyl modification enzyme MnmG</fullName>
    </recommendedName>
    <alternativeName>
        <fullName evidence="1">Glucose-inhibited division protein A</fullName>
    </alternativeName>
</protein>
<gene>
    <name evidence="1" type="primary">mnmG</name>
    <name evidence="1" type="synonym">gidA</name>
    <name type="ordered locus">ECS88_4163</name>
</gene>